<proteinExistence type="inferred from homology"/>
<organism>
    <name type="scientific">Shigella flexneri serotype 5b (strain 8401)</name>
    <dbReference type="NCBI Taxonomy" id="373384"/>
    <lineage>
        <taxon>Bacteria</taxon>
        <taxon>Pseudomonadati</taxon>
        <taxon>Pseudomonadota</taxon>
        <taxon>Gammaproteobacteria</taxon>
        <taxon>Enterobacterales</taxon>
        <taxon>Enterobacteriaceae</taxon>
        <taxon>Shigella</taxon>
    </lineage>
</organism>
<sequence length="443" mass="50223">MESLASLYKNHIATLQERTRDALARFKLDALLIHSGELFNVFLDDHPYPFKVNPQFKAWVPVTQVPNCWLLVDGVNKPKLWFYLPVDYWHNVEPLPTSFWTEDVEVIALPKADGIGSLLPAARGNIGYIGLVQERALQLGIEASNINPKGVIDYLHYYRSFKTEYELACMREAQKMAVNGHRAAEEAFRSGMSEFDINIAYLTATGHRDTDVPYSNIVALNEHAAVLHYTKLDHQAPEEMRSFLLDAGAEYNGYAADLTRTWSAKSDNDYAQLVKDVNDEQLALIATMKAGVSYVDYHIQFHQRIAKLLRKHQIITDMSEEAMVENDLTGPFMPHGIGHPLGLQVHDVAGFMQDDSGTHLAAPAKYPYLRCTRILQPGMVLTIEPGIYFIESLLAPWREGQFSKHFNWQKIEALKPFGGIRIEDNVVIHENNVENMTRDLKLA</sequence>
<protein>
    <recommendedName>
        <fullName evidence="1">Xaa-Pro dipeptidase</fullName>
        <shortName evidence="1">X-Pro dipeptidase</shortName>
        <ecNumber evidence="1">3.4.13.9</ecNumber>
    </recommendedName>
    <alternativeName>
        <fullName evidence="1">Imidodipeptidase</fullName>
    </alternativeName>
    <alternativeName>
        <fullName evidence="1">Proline dipeptidase</fullName>
        <shortName evidence="1">Prolidase</shortName>
    </alternativeName>
</protein>
<keyword id="KW-0224">Dipeptidase</keyword>
<keyword id="KW-0378">Hydrolase</keyword>
<keyword id="KW-0464">Manganese</keyword>
<keyword id="KW-0479">Metal-binding</keyword>
<keyword id="KW-0482">Metalloprotease</keyword>
<keyword id="KW-0645">Protease</keyword>
<gene>
    <name evidence="1" type="primary">pepQ</name>
    <name type="ordered locus">SFV_3653</name>
</gene>
<feature type="chain" id="PRO_0000303869" description="Xaa-Pro dipeptidase">
    <location>
        <begin position="1"/>
        <end position="443"/>
    </location>
</feature>
<feature type="binding site" evidence="1">
    <location>
        <position position="246"/>
    </location>
    <ligand>
        <name>Mn(2+)</name>
        <dbReference type="ChEBI" id="CHEBI:29035"/>
        <label>2</label>
    </ligand>
</feature>
<feature type="binding site" evidence="1">
    <location>
        <position position="257"/>
    </location>
    <ligand>
        <name>Mn(2+)</name>
        <dbReference type="ChEBI" id="CHEBI:29035"/>
        <label>1</label>
    </ligand>
</feature>
<feature type="binding site" evidence="1">
    <location>
        <position position="257"/>
    </location>
    <ligand>
        <name>Mn(2+)</name>
        <dbReference type="ChEBI" id="CHEBI:29035"/>
        <label>2</label>
    </ligand>
</feature>
<feature type="binding site" evidence="1">
    <location>
        <position position="339"/>
    </location>
    <ligand>
        <name>Mn(2+)</name>
        <dbReference type="ChEBI" id="CHEBI:29035"/>
        <label>1</label>
    </ligand>
</feature>
<feature type="binding site" evidence="1">
    <location>
        <position position="384"/>
    </location>
    <ligand>
        <name>Mn(2+)</name>
        <dbReference type="ChEBI" id="CHEBI:29035"/>
        <label>1</label>
    </ligand>
</feature>
<feature type="binding site" evidence="1">
    <location>
        <position position="423"/>
    </location>
    <ligand>
        <name>Mn(2+)</name>
        <dbReference type="ChEBI" id="CHEBI:29035"/>
        <label>1</label>
    </ligand>
</feature>
<feature type="binding site" evidence="1">
    <location>
        <position position="423"/>
    </location>
    <ligand>
        <name>Mn(2+)</name>
        <dbReference type="ChEBI" id="CHEBI:29035"/>
        <label>2</label>
    </ligand>
</feature>
<comment type="function">
    <text evidence="1">Splits dipeptides with a prolyl residue in the C-terminal position.</text>
</comment>
<comment type="catalytic activity">
    <reaction evidence="1">
        <text>Xaa-L-Pro dipeptide + H2O = an L-alpha-amino acid + L-proline</text>
        <dbReference type="Rhea" id="RHEA:76407"/>
        <dbReference type="ChEBI" id="CHEBI:15377"/>
        <dbReference type="ChEBI" id="CHEBI:59869"/>
        <dbReference type="ChEBI" id="CHEBI:60039"/>
        <dbReference type="ChEBI" id="CHEBI:195196"/>
        <dbReference type="EC" id="3.4.13.9"/>
    </reaction>
</comment>
<comment type="cofactor">
    <cofactor evidence="1">
        <name>Mn(2+)</name>
        <dbReference type="ChEBI" id="CHEBI:29035"/>
    </cofactor>
    <text evidence="1">Binds 2 manganese ions per subunit.</text>
</comment>
<comment type="similarity">
    <text evidence="1">Belongs to the peptidase M24B family. Bacterial-type prolidase subfamily.</text>
</comment>
<name>PEPQ_SHIF8</name>
<reference key="1">
    <citation type="journal article" date="2006" name="BMC Genomics">
        <title>Complete genome sequence of Shigella flexneri 5b and comparison with Shigella flexneri 2a.</title>
        <authorList>
            <person name="Nie H."/>
            <person name="Yang F."/>
            <person name="Zhang X."/>
            <person name="Yang J."/>
            <person name="Chen L."/>
            <person name="Wang J."/>
            <person name="Xiong Z."/>
            <person name="Peng J."/>
            <person name="Sun L."/>
            <person name="Dong J."/>
            <person name="Xue Y."/>
            <person name="Xu X."/>
            <person name="Chen S."/>
            <person name="Yao Z."/>
            <person name="Shen Y."/>
            <person name="Jin Q."/>
        </authorList>
    </citation>
    <scope>NUCLEOTIDE SEQUENCE [LARGE SCALE GENOMIC DNA]</scope>
    <source>
        <strain>8401</strain>
    </source>
</reference>
<accession>Q0SZ37</accession>
<dbReference type="EC" id="3.4.13.9" evidence="1"/>
<dbReference type="EMBL" id="CP000266">
    <property type="protein sequence ID" value="ABF05678.1"/>
    <property type="molecule type" value="Genomic_DNA"/>
</dbReference>
<dbReference type="RefSeq" id="WP_000444553.1">
    <property type="nucleotide sequence ID" value="NC_008258.1"/>
</dbReference>
<dbReference type="SMR" id="Q0SZ37"/>
<dbReference type="MEROPS" id="M24.003"/>
<dbReference type="KEGG" id="sfv:SFV_3653"/>
<dbReference type="HOGENOM" id="CLU_050675_0_0_6"/>
<dbReference type="Proteomes" id="UP000000659">
    <property type="component" value="Chromosome"/>
</dbReference>
<dbReference type="GO" id="GO:0005829">
    <property type="term" value="C:cytosol"/>
    <property type="evidence" value="ECO:0007669"/>
    <property type="project" value="TreeGrafter"/>
</dbReference>
<dbReference type="GO" id="GO:0004177">
    <property type="term" value="F:aminopeptidase activity"/>
    <property type="evidence" value="ECO:0007669"/>
    <property type="project" value="TreeGrafter"/>
</dbReference>
<dbReference type="GO" id="GO:0046872">
    <property type="term" value="F:metal ion binding"/>
    <property type="evidence" value="ECO:0007669"/>
    <property type="project" value="UniProtKB-KW"/>
</dbReference>
<dbReference type="GO" id="GO:0008235">
    <property type="term" value="F:metalloexopeptidase activity"/>
    <property type="evidence" value="ECO:0007669"/>
    <property type="project" value="UniProtKB-UniRule"/>
</dbReference>
<dbReference type="GO" id="GO:0016795">
    <property type="term" value="F:phosphoric triester hydrolase activity"/>
    <property type="evidence" value="ECO:0007669"/>
    <property type="project" value="InterPro"/>
</dbReference>
<dbReference type="GO" id="GO:0102009">
    <property type="term" value="F:proline dipeptidase activity"/>
    <property type="evidence" value="ECO:0007669"/>
    <property type="project" value="UniProtKB-EC"/>
</dbReference>
<dbReference type="GO" id="GO:0006508">
    <property type="term" value="P:proteolysis"/>
    <property type="evidence" value="ECO:0007669"/>
    <property type="project" value="UniProtKB-KW"/>
</dbReference>
<dbReference type="CDD" id="cd01087">
    <property type="entry name" value="Prolidase"/>
    <property type="match status" value="1"/>
</dbReference>
<dbReference type="FunFam" id="3.40.350.10:FF:000002">
    <property type="entry name" value="Xaa-Pro dipeptidase"/>
    <property type="match status" value="1"/>
</dbReference>
<dbReference type="FunFam" id="3.90.230.10:FF:000006">
    <property type="entry name" value="Xaa-Pro dipeptidase"/>
    <property type="match status" value="1"/>
</dbReference>
<dbReference type="Gene3D" id="3.90.230.10">
    <property type="entry name" value="Creatinase/methionine aminopeptidase superfamily"/>
    <property type="match status" value="1"/>
</dbReference>
<dbReference type="Gene3D" id="3.40.350.10">
    <property type="entry name" value="Creatinase/prolidase N-terminal domain"/>
    <property type="match status" value="1"/>
</dbReference>
<dbReference type="HAMAP" id="MF_01279">
    <property type="entry name" value="X_Pro_dipeptid"/>
    <property type="match status" value="1"/>
</dbReference>
<dbReference type="InterPro" id="IPR029149">
    <property type="entry name" value="Creatin/AminoP/Spt16_N"/>
</dbReference>
<dbReference type="InterPro" id="IPR036005">
    <property type="entry name" value="Creatinase/aminopeptidase-like"/>
</dbReference>
<dbReference type="InterPro" id="IPR048819">
    <property type="entry name" value="PepQ_N"/>
</dbReference>
<dbReference type="InterPro" id="IPR000994">
    <property type="entry name" value="Pept_M24"/>
</dbReference>
<dbReference type="InterPro" id="IPR001131">
    <property type="entry name" value="Peptidase_M24B_aminopep-P_CS"/>
</dbReference>
<dbReference type="InterPro" id="IPR052433">
    <property type="entry name" value="X-Pro_dipept-like"/>
</dbReference>
<dbReference type="InterPro" id="IPR022846">
    <property type="entry name" value="X_Pro_dipept"/>
</dbReference>
<dbReference type="NCBIfam" id="NF010133">
    <property type="entry name" value="PRK13607.1"/>
    <property type="match status" value="1"/>
</dbReference>
<dbReference type="PANTHER" id="PTHR43226">
    <property type="entry name" value="XAA-PRO AMINOPEPTIDASE 3"/>
    <property type="match status" value="1"/>
</dbReference>
<dbReference type="PANTHER" id="PTHR43226:SF8">
    <property type="entry name" value="XAA-PRO DIPEPTIDASE"/>
    <property type="match status" value="1"/>
</dbReference>
<dbReference type="Pfam" id="PF21216">
    <property type="entry name" value="PepQ_N"/>
    <property type="match status" value="1"/>
</dbReference>
<dbReference type="Pfam" id="PF00557">
    <property type="entry name" value="Peptidase_M24"/>
    <property type="match status" value="1"/>
</dbReference>
<dbReference type="SUPFAM" id="SSF55920">
    <property type="entry name" value="Creatinase/aminopeptidase"/>
    <property type="match status" value="1"/>
</dbReference>
<dbReference type="PROSITE" id="PS00491">
    <property type="entry name" value="PROLINE_PEPTIDASE"/>
    <property type="match status" value="1"/>
</dbReference>
<evidence type="ECO:0000255" key="1">
    <source>
        <dbReference type="HAMAP-Rule" id="MF_01279"/>
    </source>
</evidence>